<accession>B2J8F0</accession>
<evidence type="ECO:0000255" key="1">
    <source>
        <dbReference type="HAMAP-Rule" id="MF_00121"/>
    </source>
</evidence>
<protein>
    <recommendedName>
        <fullName evidence="1">Aspartyl/glutamyl-tRNA(Asn/Gln) amidotransferase subunit B</fullName>
        <shortName evidence="1">Asp/Glu-ADT subunit B</shortName>
        <ecNumber evidence="1">6.3.5.-</ecNumber>
    </recommendedName>
</protein>
<sequence length="491" mass="54760">MTTATTVKTEYEAIIGLETHCQLSTKTKIFSNSSTAFGADPNTNIDPVCMGLPGVLPVLNEKVLEYAVKTGLALNCQIARYSKFDRKQYFYPDLPKNYQISQYDLPIAEHGWLEIELVDAEGNPSRKRIGITRLHMEEDAGKLVHAGSDRLSGSSYSLVDYNRAGIPLVEIVSEPDLRSGLEAAEYAEELRRIVRYLGVSDGNMQEGSLRCDVNISVRPVGRKEFGTKVEIKNMNSFSAIQRAIDYEIERQIAAIEAGDRIIQETRLWEEGAQRTSSMRVKEGSSDYRYFPEPDLAPIEVSNEQLENWRSELPELPAQKRHHYESELGLSAYDARVLTEDRSIAEYFETAIASGANPKAAANWITQDIAAHLNKQKLTITQIELTPTNLAEIITRIETGKISNAQAKEKLPDLLSGISPEKAFAGLELITDPTVLEPIVDEVIAANPKELEKYRNGNTNLKGFFVGQVLKKTAKRADPKLTNELVEKKLNA</sequence>
<feature type="chain" id="PRO_1000095228" description="Aspartyl/glutamyl-tRNA(Asn/Gln) amidotransferase subunit B">
    <location>
        <begin position="1"/>
        <end position="491"/>
    </location>
</feature>
<gene>
    <name evidence="1" type="primary">gatB</name>
    <name type="ordered locus">Npun_R2359</name>
</gene>
<comment type="function">
    <text evidence="1">Allows the formation of correctly charged Asn-tRNA(Asn) or Gln-tRNA(Gln) through the transamidation of misacylated Asp-tRNA(Asn) or Glu-tRNA(Gln) in organisms which lack either or both of asparaginyl-tRNA or glutaminyl-tRNA synthetases. The reaction takes place in the presence of glutamine and ATP through an activated phospho-Asp-tRNA(Asn) or phospho-Glu-tRNA(Gln).</text>
</comment>
<comment type="catalytic activity">
    <reaction evidence="1">
        <text>L-glutamyl-tRNA(Gln) + L-glutamine + ATP + H2O = L-glutaminyl-tRNA(Gln) + L-glutamate + ADP + phosphate + H(+)</text>
        <dbReference type="Rhea" id="RHEA:17521"/>
        <dbReference type="Rhea" id="RHEA-COMP:9681"/>
        <dbReference type="Rhea" id="RHEA-COMP:9684"/>
        <dbReference type="ChEBI" id="CHEBI:15377"/>
        <dbReference type="ChEBI" id="CHEBI:15378"/>
        <dbReference type="ChEBI" id="CHEBI:29985"/>
        <dbReference type="ChEBI" id="CHEBI:30616"/>
        <dbReference type="ChEBI" id="CHEBI:43474"/>
        <dbReference type="ChEBI" id="CHEBI:58359"/>
        <dbReference type="ChEBI" id="CHEBI:78520"/>
        <dbReference type="ChEBI" id="CHEBI:78521"/>
        <dbReference type="ChEBI" id="CHEBI:456216"/>
    </reaction>
</comment>
<comment type="catalytic activity">
    <reaction evidence="1">
        <text>L-aspartyl-tRNA(Asn) + L-glutamine + ATP + H2O = L-asparaginyl-tRNA(Asn) + L-glutamate + ADP + phosphate + 2 H(+)</text>
        <dbReference type="Rhea" id="RHEA:14513"/>
        <dbReference type="Rhea" id="RHEA-COMP:9674"/>
        <dbReference type="Rhea" id="RHEA-COMP:9677"/>
        <dbReference type="ChEBI" id="CHEBI:15377"/>
        <dbReference type="ChEBI" id="CHEBI:15378"/>
        <dbReference type="ChEBI" id="CHEBI:29985"/>
        <dbReference type="ChEBI" id="CHEBI:30616"/>
        <dbReference type="ChEBI" id="CHEBI:43474"/>
        <dbReference type="ChEBI" id="CHEBI:58359"/>
        <dbReference type="ChEBI" id="CHEBI:78515"/>
        <dbReference type="ChEBI" id="CHEBI:78516"/>
        <dbReference type="ChEBI" id="CHEBI:456216"/>
    </reaction>
</comment>
<comment type="subunit">
    <text evidence="1">Heterotrimer of A, B and C subunits.</text>
</comment>
<comment type="similarity">
    <text evidence="1">Belongs to the GatB/GatE family. GatB subfamily.</text>
</comment>
<dbReference type="EC" id="6.3.5.-" evidence="1"/>
<dbReference type="EMBL" id="CP001037">
    <property type="protein sequence ID" value="ACC80927.1"/>
    <property type="molecule type" value="Genomic_DNA"/>
</dbReference>
<dbReference type="RefSeq" id="WP_012408921.1">
    <property type="nucleotide sequence ID" value="NC_010628.1"/>
</dbReference>
<dbReference type="SMR" id="B2J8F0"/>
<dbReference type="STRING" id="63737.Npun_R2359"/>
<dbReference type="EnsemblBacteria" id="ACC80927">
    <property type="protein sequence ID" value="ACC80927"/>
    <property type="gene ID" value="Npun_R2359"/>
</dbReference>
<dbReference type="KEGG" id="npu:Npun_R2359"/>
<dbReference type="eggNOG" id="COG0064">
    <property type="taxonomic scope" value="Bacteria"/>
</dbReference>
<dbReference type="HOGENOM" id="CLU_019240_0_0_3"/>
<dbReference type="OrthoDB" id="9804078at2"/>
<dbReference type="PhylomeDB" id="B2J8F0"/>
<dbReference type="Proteomes" id="UP000001191">
    <property type="component" value="Chromosome"/>
</dbReference>
<dbReference type="GO" id="GO:0050566">
    <property type="term" value="F:asparaginyl-tRNA synthase (glutamine-hydrolyzing) activity"/>
    <property type="evidence" value="ECO:0007669"/>
    <property type="project" value="RHEA"/>
</dbReference>
<dbReference type="GO" id="GO:0005524">
    <property type="term" value="F:ATP binding"/>
    <property type="evidence" value="ECO:0007669"/>
    <property type="project" value="UniProtKB-KW"/>
</dbReference>
<dbReference type="GO" id="GO:0050567">
    <property type="term" value="F:glutaminyl-tRNA synthase (glutamine-hydrolyzing) activity"/>
    <property type="evidence" value="ECO:0007669"/>
    <property type="project" value="UniProtKB-UniRule"/>
</dbReference>
<dbReference type="GO" id="GO:0070681">
    <property type="term" value="P:glutaminyl-tRNAGln biosynthesis via transamidation"/>
    <property type="evidence" value="ECO:0007669"/>
    <property type="project" value="TreeGrafter"/>
</dbReference>
<dbReference type="GO" id="GO:0006412">
    <property type="term" value="P:translation"/>
    <property type="evidence" value="ECO:0007669"/>
    <property type="project" value="UniProtKB-UniRule"/>
</dbReference>
<dbReference type="FunFam" id="1.10.10.410:FF:000001">
    <property type="entry name" value="Aspartyl/glutamyl-tRNA(Asn/Gln) amidotransferase subunit B"/>
    <property type="match status" value="1"/>
</dbReference>
<dbReference type="FunFam" id="1.10.150.380:FF:000001">
    <property type="entry name" value="Aspartyl/glutamyl-tRNA(Asn/Gln) amidotransferase subunit B"/>
    <property type="match status" value="1"/>
</dbReference>
<dbReference type="Gene3D" id="1.10.10.410">
    <property type="match status" value="1"/>
</dbReference>
<dbReference type="Gene3D" id="1.10.150.380">
    <property type="entry name" value="GatB domain, N-terminal subdomain"/>
    <property type="match status" value="1"/>
</dbReference>
<dbReference type="HAMAP" id="MF_00121">
    <property type="entry name" value="GatB"/>
    <property type="match status" value="1"/>
</dbReference>
<dbReference type="InterPro" id="IPR017959">
    <property type="entry name" value="Asn/Gln-tRNA_amidoTrfase_suB/E"/>
</dbReference>
<dbReference type="InterPro" id="IPR006075">
    <property type="entry name" value="Asn/Gln-tRNA_Trfase_suB/E_cat"/>
</dbReference>
<dbReference type="InterPro" id="IPR018027">
    <property type="entry name" value="Asn/Gln_amidotransferase"/>
</dbReference>
<dbReference type="InterPro" id="IPR003789">
    <property type="entry name" value="Asn/Gln_tRNA_amidoTrase-B-like"/>
</dbReference>
<dbReference type="InterPro" id="IPR004413">
    <property type="entry name" value="GatB"/>
</dbReference>
<dbReference type="InterPro" id="IPR042114">
    <property type="entry name" value="GatB_C_1"/>
</dbReference>
<dbReference type="InterPro" id="IPR023168">
    <property type="entry name" value="GatB_Yqey_C_2"/>
</dbReference>
<dbReference type="InterPro" id="IPR017958">
    <property type="entry name" value="Gln-tRNA_amidoTrfase_suB_CS"/>
</dbReference>
<dbReference type="InterPro" id="IPR014746">
    <property type="entry name" value="Gln_synth/guanido_kin_cat_dom"/>
</dbReference>
<dbReference type="NCBIfam" id="TIGR00133">
    <property type="entry name" value="gatB"/>
    <property type="match status" value="1"/>
</dbReference>
<dbReference type="NCBIfam" id="NF004012">
    <property type="entry name" value="PRK05477.1-2"/>
    <property type="match status" value="1"/>
</dbReference>
<dbReference type="NCBIfam" id="NF004014">
    <property type="entry name" value="PRK05477.1-4"/>
    <property type="match status" value="1"/>
</dbReference>
<dbReference type="PANTHER" id="PTHR11659">
    <property type="entry name" value="GLUTAMYL-TRNA GLN AMIDOTRANSFERASE SUBUNIT B MITOCHONDRIAL AND PROKARYOTIC PET112-RELATED"/>
    <property type="match status" value="1"/>
</dbReference>
<dbReference type="PANTHER" id="PTHR11659:SF0">
    <property type="entry name" value="GLUTAMYL-TRNA(GLN) AMIDOTRANSFERASE SUBUNIT B, MITOCHONDRIAL"/>
    <property type="match status" value="1"/>
</dbReference>
<dbReference type="Pfam" id="PF02934">
    <property type="entry name" value="GatB_N"/>
    <property type="match status" value="1"/>
</dbReference>
<dbReference type="Pfam" id="PF02637">
    <property type="entry name" value="GatB_Yqey"/>
    <property type="match status" value="1"/>
</dbReference>
<dbReference type="SMART" id="SM00845">
    <property type="entry name" value="GatB_Yqey"/>
    <property type="match status" value="1"/>
</dbReference>
<dbReference type="SUPFAM" id="SSF89095">
    <property type="entry name" value="GatB/YqeY motif"/>
    <property type="match status" value="1"/>
</dbReference>
<dbReference type="SUPFAM" id="SSF55931">
    <property type="entry name" value="Glutamine synthetase/guanido kinase"/>
    <property type="match status" value="1"/>
</dbReference>
<dbReference type="PROSITE" id="PS01234">
    <property type="entry name" value="GATB"/>
    <property type="match status" value="1"/>
</dbReference>
<proteinExistence type="inferred from homology"/>
<reference key="1">
    <citation type="journal article" date="2013" name="Plant Physiol.">
        <title>A Nostoc punctiforme Sugar Transporter Necessary to Establish a Cyanobacterium-Plant Symbiosis.</title>
        <authorList>
            <person name="Ekman M."/>
            <person name="Picossi S."/>
            <person name="Campbell E.L."/>
            <person name="Meeks J.C."/>
            <person name="Flores E."/>
        </authorList>
    </citation>
    <scope>NUCLEOTIDE SEQUENCE [LARGE SCALE GENOMIC DNA]</scope>
    <source>
        <strain>ATCC 29133 / PCC 73102</strain>
    </source>
</reference>
<name>GATB_NOSP7</name>
<organism>
    <name type="scientific">Nostoc punctiforme (strain ATCC 29133 / PCC 73102)</name>
    <dbReference type="NCBI Taxonomy" id="63737"/>
    <lineage>
        <taxon>Bacteria</taxon>
        <taxon>Bacillati</taxon>
        <taxon>Cyanobacteriota</taxon>
        <taxon>Cyanophyceae</taxon>
        <taxon>Nostocales</taxon>
        <taxon>Nostocaceae</taxon>
        <taxon>Nostoc</taxon>
    </lineage>
</organism>
<keyword id="KW-0067">ATP-binding</keyword>
<keyword id="KW-0436">Ligase</keyword>
<keyword id="KW-0547">Nucleotide-binding</keyword>
<keyword id="KW-0648">Protein biosynthesis</keyword>
<keyword id="KW-1185">Reference proteome</keyword>